<reference key="1">
    <citation type="journal article" date="1988" name="J. Bacteriol.">
        <title>Genes encoding the alpha, gamma, delta, and four F0 subunits of ATP synthase constitute an operon in the cyanobacterium Anabaena sp. strain PCC 7120.</title>
        <authorList>
            <person name="McCarn D.F."/>
            <person name="Whitaker R.A."/>
            <person name="Alam J."/>
            <person name="Vrba J.M."/>
            <person name="Curtis S.E."/>
        </authorList>
    </citation>
    <scope>NUCLEOTIDE SEQUENCE [GENOMIC DNA]</scope>
</reference>
<reference key="2">
    <citation type="journal article" date="2001" name="DNA Res.">
        <title>Complete genomic sequence of the filamentous nitrogen-fixing cyanobacterium Anabaena sp. strain PCC 7120.</title>
        <authorList>
            <person name="Kaneko T."/>
            <person name="Nakamura Y."/>
            <person name="Wolk C.P."/>
            <person name="Kuritz T."/>
            <person name="Sasamoto S."/>
            <person name="Watanabe A."/>
            <person name="Iriguchi M."/>
            <person name="Ishikawa A."/>
            <person name="Kawashima K."/>
            <person name="Kimura T."/>
            <person name="Kishida Y."/>
            <person name="Kohara M."/>
            <person name="Matsumoto M."/>
            <person name="Matsuno A."/>
            <person name="Muraki A."/>
            <person name="Nakazaki N."/>
            <person name="Shimpo S."/>
            <person name="Sugimoto M."/>
            <person name="Takazawa M."/>
            <person name="Yamada M."/>
            <person name="Yasuda M."/>
            <person name="Tabata S."/>
        </authorList>
    </citation>
    <scope>NUCLEOTIDE SEQUENCE [LARGE SCALE GENOMIC DNA]</scope>
    <source>
        <strain>PCC 7120 / SAG 25.82 / UTEX 2576</strain>
    </source>
</reference>
<comment type="function">
    <text evidence="1">F(1)F(0) ATP synthase produces ATP from ADP in the presence of a proton or sodium gradient. F-type ATPases consist of two structural domains, F(1) containing the extramembraneous catalytic core and F(0) containing the membrane proton channel, linked together by a central stalk and a peripheral stalk. During catalysis, ATP synthesis in the catalytic domain of F(1) is coupled via a rotary mechanism of the central stalk subunits to proton translocation.</text>
</comment>
<comment type="function">
    <text evidence="1">Component of the F(0) channel, it forms part of the peripheral stalk, linking F(1) to F(0). The b'-subunit is a diverged and duplicated form of b found in plants and photosynthetic bacteria.</text>
</comment>
<comment type="subunit">
    <text evidence="1">F-type ATPases have 2 components, F(1) - the catalytic core - and F(0) - the membrane proton channel. F(1) has five subunits: alpha(3), beta(3), gamma(1), delta(1), epsilon(1). F(0) has four main subunits: a(1), b(1), b'(1) and c(10-14). The alpha and beta chains form an alternating ring which encloses part of the gamma chain. F(1) is attached to F(0) by a central stalk formed by the gamma and epsilon chains, while a peripheral stalk is formed by the delta, b and b' chains.</text>
</comment>
<comment type="subcellular location">
    <subcellularLocation>
        <location evidence="1">Cellular thylakoid membrane</location>
        <topology evidence="1">Single-pass membrane protein</topology>
    </subcellularLocation>
</comment>
<comment type="similarity">
    <text evidence="1">Belongs to the ATPase B chain family.</text>
</comment>
<proteinExistence type="inferred from homology"/>
<keyword id="KW-0066">ATP synthesis</keyword>
<keyword id="KW-0138">CF(0)</keyword>
<keyword id="KW-0375">Hydrogen ion transport</keyword>
<keyword id="KW-0406">Ion transport</keyword>
<keyword id="KW-0472">Membrane</keyword>
<keyword id="KW-1185">Reference proteome</keyword>
<keyword id="KW-0793">Thylakoid</keyword>
<keyword id="KW-0812">Transmembrane</keyword>
<keyword id="KW-1133">Transmembrane helix</keyword>
<keyword id="KW-0813">Transport</keyword>
<organism>
    <name type="scientific">Nostoc sp. (strain PCC 7120 / SAG 25.82 / UTEX 2576)</name>
    <dbReference type="NCBI Taxonomy" id="103690"/>
    <lineage>
        <taxon>Bacteria</taxon>
        <taxon>Bacillati</taxon>
        <taxon>Cyanobacteriota</taxon>
        <taxon>Cyanophyceae</taxon>
        <taxon>Nostocales</taxon>
        <taxon>Nostocaceae</taxon>
        <taxon>Nostoc</taxon>
    </lineage>
</organism>
<feature type="chain" id="PRO_0000082426" description="ATP synthase subunit b'">
    <location>
        <begin position="1"/>
        <end position="163"/>
    </location>
</feature>
<feature type="transmembrane region" description="Helical" evidence="1">
    <location>
        <begin position="28"/>
        <end position="45"/>
    </location>
</feature>
<accession>P12410</accession>
<sequence length="163" mass="17973">MTHWITLLAVEKVAKEGGLFDLDATLPLMAIQFLLLALILNATLYKPLGKAIDGRNEYVRNNQLEAQERLSKAEKLAEAYEQELAGARRQAQTIIADAQAEAQKIAAEKVAAAQKEAQAQREQAAGEIEQQKQQALASLEQQVDALSRQILEKLLGADLVKQR</sequence>
<gene>
    <name evidence="1" type="primary">atpF2</name>
    <name evidence="1" type="synonym">atpG</name>
    <name type="ordered locus">all0008</name>
</gene>
<protein>
    <recommendedName>
        <fullName evidence="1">ATP synthase subunit b'</fullName>
    </recommendedName>
    <alternativeName>
        <fullName evidence="1">ATP synthase F(0) sector subunit b'</fullName>
    </alternativeName>
    <alternativeName>
        <fullName evidence="1">ATPase subunit II</fullName>
    </alternativeName>
    <alternativeName>
        <fullName evidence="1">F-type ATPase subunit b'</fullName>
        <shortName evidence="1">F-ATPase subunit b'</shortName>
    </alternativeName>
</protein>
<dbReference type="EMBL" id="AF242564">
    <property type="protein sequence ID" value="AAA21988.1"/>
    <property type="molecule type" value="Genomic_DNA"/>
</dbReference>
<dbReference type="EMBL" id="BA000019">
    <property type="protein sequence ID" value="BAB77532.1"/>
    <property type="molecule type" value="Genomic_DNA"/>
</dbReference>
<dbReference type="PIR" id="AH1807">
    <property type="entry name" value="AH1807"/>
</dbReference>
<dbReference type="RefSeq" id="WP_010994185.1">
    <property type="nucleotide sequence ID" value="NZ_RSCN01000005.1"/>
</dbReference>
<dbReference type="SMR" id="P12410"/>
<dbReference type="STRING" id="103690.gene:10492012"/>
<dbReference type="KEGG" id="ana:all0008"/>
<dbReference type="eggNOG" id="COG0711">
    <property type="taxonomic scope" value="Bacteria"/>
</dbReference>
<dbReference type="OrthoDB" id="426571at2"/>
<dbReference type="Proteomes" id="UP000002483">
    <property type="component" value="Chromosome"/>
</dbReference>
<dbReference type="GO" id="GO:0031676">
    <property type="term" value="C:plasma membrane-derived thylakoid membrane"/>
    <property type="evidence" value="ECO:0007669"/>
    <property type="project" value="UniProtKB-SubCell"/>
</dbReference>
<dbReference type="GO" id="GO:0045259">
    <property type="term" value="C:proton-transporting ATP synthase complex"/>
    <property type="evidence" value="ECO:0007669"/>
    <property type="project" value="UniProtKB-KW"/>
</dbReference>
<dbReference type="GO" id="GO:0046933">
    <property type="term" value="F:proton-transporting ATP synthase activity, rotational mechanism"/>
    <property type="evidence" value="ECO:0007669"/>
    <property type="project" value="UniProtKB-UniRule"/>
</dbReference>
<dbReference type="GO" id="GO:0046961">
    <property type="term" value="F:proton-transporting ATPase activity, rotational mechanism"/>
    <property type="evidence" value="ECO:0007669"/>
    <property type="project" value="TreeGrafter"/>
</dbReference>
<dbReference type="CDD" id="cd06503">
    <property type="entry name" value="ATP-synt_Fo_b"/>
    <property type="match status" value="1"/>
</dbReference>
<dbReference type="HAMAP" id="MF_01398">
    <property type="entry name" value="ATP_synth_b_bprime"/>
    <property type="match status" value="1"/>
</dbReference>
<dbReference type="HAMAP" id="MF_01399">
    <property type="entry name" value="ATP_synth_bprime"/>
    <property type="match status" value="1"/>
</dbReference>
<dbReference type="InterPro" id="IPR034679">
    <property type="entry name" value="ATP_synth_b"/>
</dbReference>
<dbReference type="InterPro" id="IPR028987">
    <property type="entry name" value="ATP_synth_B-like_membr_sf"/>
</dbReference>
<dbReference type="InterPro" id="IPR002146">
    <property type="entry name" value="ATP_synth_b/b'su_bac/chlpt"/>
</dbReference>
<dbReference type="InterPro" id="IPR050059">
    <property type="entry name" value="ATP_synthase_B_chain"/>
</dbReference>
<dbReference type="NCBIfam" id="NF005607">
    <property type="entry name" value="PRK07353.1"/>
    <property type="match status" value="1"/>
</dbReference>
<dbReference type="PANTHER" id="PTHR33445">
    <property type="entry name" value="ATP SYNTHASE SUBUNIT B', CHLOROPLASTIC"/>
    <property type="match status" value="1"/>
</dbReference>
<dbReference type="PANTHER" id="PTHR33445:SF2">
    <property type="entry name" value="ATP SYNTHASE SUBUNIT B', CHLOROPLASTIC"/>
    <property type="match status" value="1"/>
</dbReference>
<dbReference type="Pfam" id="PF00430">
    <property type="entry name" value="ATP-synt_B"/>
    <property type="match status" value="1"/>
</dbReference>
<dbReference type="SUPFAM" id="SSF81573">
    <property type="entry name" value="F1F0 ATP synthase subunit B, membrane domain"/>
    <property type="match status" value="1"/>
</dbReference>
<evidence type="ECO:0000255" key="1">
    <source>
        <dbReference type="HAMAP-Rule" id="MF_01399"/>
    </source>
</evidence>
<name>ATPF2_NOSS1</name>